<protein>
    <recommendedName>
        <fullName>Tegument protein VP22</fullName>
    </recommendedName>
</protein>
<comment type="function">
    <text evidence="1">Tegument protein that plays different roles during the time course of infection (By similarity). Participates in both the accumulation of viral mRNAs and viral protein translation at late time of infection (By similarity). Modulates the RNase activity of the virion host shutoff protein UL41 probably to ensure necessary levels of key cellular mRNAs and proteins (By similarity). Plays a role in microtubule reorganization that occurs after viral infection by stabilizing microtubule network (By similarity). Plays a role in the inhibition of host innate immune system by targeting the CGAS enzymatic activity which is the principal cytosolic DNA sensor that detects invading viral DNA. Acts by mediating disruption of liquid-like droplets in which CGAS is activated, thereby preventing CGAS activity (By similarity).</text>
</comment>
<comment type="subunit">
    <text evidence="1">Interacts with gE (via C-terminus); this interaction is necessary for the recruitment of VP22 to the Golgi and its packaging into virions (By similarity). Interacts with gM (via C-terminus) (By similarity). Interacts with VP16; this interaction allows the formation of a tripartite complex composed of VP16, VP22 and UL41/VHS (By similarity). Interacts with the capsid-binding protein UL16 (By similarity). Interacts with host CGAS (By similarity).</text>
</comment>
<comment type="subcellular location">
    <subcellularLocation>
        <location evidence="1">Virion tegument</location>
    </subcellularLocation>
    <subcellularLocation>
        <location evidence="1">Host cytoplasm</location>
    </subcellularLocation>
    <subcellularLocation>
        <location evidence="1">Host nucleus</location>
    </subcellularLocation>
    <subcellularLocation>
        <location evidence="1">Host Golgi apparatus</location>
    </subcellularLocation>
    <text evidence="1">One of the most abundant tegument protein (about 2000 copies per virion). Localizes in the cytoplasm at 8 hours postinfection and in the nucleus at 16 hours postinfection. During virion morphogenesis, this protein probably accumulates at the trans-Golgi where secondary envelopment occurs.</text>
</comment>
<comment type="PTM">
    <text evidence="1">Highly phosphorylated in the host cell. Packaging is selective for underphosphorylated forms.</text>
</comment>
<comment type="similarity">
    <text evidence="4">Belongs to the alphaherpesvirinae VP22 tegument protein family.</text>
</comment>
<accession>P89468</accession>
<proteinExistence type="inferred from homology"/>
<reference key="1">
    <citation type="journal article" date="1987" name="J. Gen. Virol.">
        <title>DNA sequence and genetic content of the HindIII l region in the short unique component of the herpes simplex virus type 2 genome: identification of the gene encoding glycoprotein G, and evolutionary comparisons.</title>
        <authorList>
            <person name="McGeoch D.J."/>
            <person name="Moss H.W.M."/>
            <person name="McNab D."/>
            <person name="Frame M.C."/>
        </authorList>
    </citation>
    <scope>NUCLEOTIDE SEQUENCE [GENOMIC DNA]</scope>
</reference>
<reference key="2">
    <citation type="journal article" date="1998" name="J. Virol.">
        <title>The genome sequence of herpes simplex virus type 2.</title>
        <authorList>
            <person name="Dolan A."/>
            <person name="Jamieson F.E."/>
            <person name="Cunningham C."/>
            <person name="Barnett B.C."/>
            <person name="McGeoch D.J."/>
        </authorList>
    </citation>
    <scope>NUCLEOTIDE SEQUENCE [LARGE SCALE GENOMIC DNA]</scope>
</reference>
<organismHost>
    <name type="scientific">Homo sapiens</name>
    <name type="common">Human</name>
    <dbReference type="NCBI Taxonomy" id="9606"/>
</organismHost>
<keyword id="KW-1035">Host cytoplasm</keyword>
<keyword id="KW-1040">Host Golgi apparatus</keyword>
<keyword id="KW-1048">Host nucleus</keyword>
<keyword id="KW-0597">Phosphoprotein</keyword>
<keyword id="KW-1185">Reference proteome</keyword>
<keyword id="KW-0946">Virion</keyword>
<keyword id="KW-0920">Virion tegument</keyword>
<evidence type="ECO:0000250" key="1">
    <source>
        <dbReference type="UniProtKB" id="P10233"/>
    </source>
</evidence>
<evidence type="ECO:0000250" key="2">
    <source>
        <dbReference type="UniProtKB" id="P30022"/>
    </source>
</evidence>
<evidence type="ECO:0000256" key="3">
    <source>
        <dbReference type="SAM" id="MobiDB-lite"/>
    </source>
</evidence>
<evidence type="ECO:0000305" key="4"/>
<sequence>MTSRRSVKSCPREAPRGTHEELYYGPVSPADPESPRDDFRRGAGPMRARPRGEVRFLHYDEAGYALYRDSSSDDDESRDTARPRRSASVAGSHGPGPARAPPPPGGPVGAGGRSHAPPARTPKMTRGAPKASATPATDPARGRRPAQADSAVLLDAPAPTASGRTKTPAQGLAKKLHFSTAPPSPTAPWTPRVAGFNKRVFCAAVGRLAATHARLAAVQLWDMSRPHTDEDLNELLDLTTIRVTVCEGKNLLQRANELVNPDAAQDVDATAAARGRPAGRAAATARAPARSASRPRRPLE</sequence>
<organism>
    <name type="scientific">Human herpesvirus 2 (strain HG52)</name>
    <name type="common">HHV-2</name>
    <name type="synonym">Human herpes simplex virus 2</name>
    <dbReference type="NCBI Taxonomy" id="10315"/>
    <lineage>
        <taxon>Viruses</taxon>
        <taxon>Duplodnaviria</taxon>
        <taxon>Heunggongvirae</taxon>
        <taxon>Peploviricota</taxon>
        <taxon>Herviviricetes</taxon>
        <taxon>Herpesvirales</taxon>
        <taxon>Orthoherpesviridae</taxon>
        <taxon>Alphaherpesvirinae</taxon>
        <taxon>Simplexvirus</taxon>
        <taxon>Simplexvirus humanalpha2</taxon>
        <taxon>Human herpesvirus 2</taxon>
    </lineage>
</organism>
<dbReference type="EMBL" id="Z86099">
    <property type="protein sequence ID" value="CAB06735.1"/>
    <property type="molecule type" value="Genomic_DNA"/>
</dbReference>
<dbReference type="RefSeq" id="YP_009137201.1">
    <property type="nucleotide sequence ID" value="NC_001798.2"/>
</dbReference>
<dbReference type="SMR" id="P89468"/>
<dbReference type="DNASU" id="1487336"/>
<dbReference type="GeneID" id="1487336"/>
<dbReference type="KEGG" id="vg:1487336"/>
<dbReference type="Proteomes" id="UP000001874">
    <property type="component" value="Segment"/>
</dbReference>
<dbReference type="GO" id="GO:0044177">
    <property type="term" value="C:host cell Golgi apparatus"/>
    <property type="evidence" value="ECO:0007669"/>
    <property type="project" value="UniProtKB-SubCell"/>
</dbReference>
<dbReference type="GO" id="GO:0042025">
    <property type="term" value="C:host cell nucleus"/>
    <property type="evidence" value="ECO:0007669"/>
    <property type="project" value="UniProtKB-SubCell"/>
</dbReference>
<dbReference type="GO" id="GO:0019033">
    <property type="term" value="C:viral tegument"/>
    <property type="evidence" value="ECO:0007669"/>
    <property type="project" value="UniProtKB-SubCell"/>
</dbReference>
<dbReference type="InterPro" id="IPR006908">
    <property type="entry name" value="Herpes_UL49"/>
</dbReference>
<dbReference type="Pfam" id="PF04823">
    <property type="entry name" value="Herpes_UL49_2"/>
    <property type="match status" value="1"/>
</dbReference>
<feature type="chain" id="PRO_0000385495" description="Tegument protein VP22">
    <location>
        <begin position="1"/>
        <end position="300"/>
    </location>
</feature>
<feature type="region of interest" description="Disordered" evidence="3">
    <location>
        <begin position="1"/>
        <end position="148"/>
    </location>
</feature>
<feature type="region of interest" description="Interaction with gE" evidence="1">
    <location>
        <begin position="174"/>
        <end position="267"/>
    </location>
</feature>
<feature type="region of interest" description="Disordered" evidence="3">
    <location>
        <begin position="269"/>
        <end position="300"/>
    </location>
</feature>
<feature type="short sequence motif" description="Nuclear localization signal" evidence="2">
    <location>
        <begin position="163"/>
        <end position="166"/>
    </location>
</feature>
<feature type="short sequence motif" description="Nuclear export signal" evidence="2">
    <location>
        <begin position="232"/>
        <end position="244"/>
    </location>
</feature>
<feature type="compositionally biased region" description="Basic and acidic residues" evidence="3">
    <location>
        <begin position="10"/>
        <end position="22"/>
    </location>
</feature>
<feature type="compositionally biased region" description="Basic and acidic residues" evidence="3">
    <location>
        <begin position="50"/>
        <end position="61"/>
    </location>
</feature>
<feature type="compositionally biased region" description="Low complexity" evidence="3">
    <location>
        <begin position="269"/>
        <end position="292"/>
    </location>
</feature>
<gene>
    <name type="ORF">UL49</name>
</gene>
<name>VP22_HHV2H</name>